<proteinExistence type="inferred from homology"/>
<keyword id="KW-0488">Methylation</keyword>
<keyword id="KW-1185">Reference proteome</keyword>
<keyword id="KW-0687">Ribonucleoprotein</keyword>
<keyword id="KW-0689">Ribosomal protein</keyword>
<keyword id="KW-0694">RNA-binding</keyword>
<keyword id="KW-0699">rRNA-binding</keyword>
<accession>Q5NPL1</accession>
<protein>
    <recommendedName>
        <fullName evidence="1">Large ribosomal subunit protein uL11</fullName>
    </recommendedName>
    <alternativeName>
        <fullName evidence="2">50S ribosomal protein L11</fullName>
    </alternativeName>
</protein>
<comment type="function">
    <text evidence="1">Forms part of the ribosomal stalk which helps the ribosome interact with GTP-bound translation factors.</text>
</comment>
<comment type="subunit">
    <text evidence="1">Part of the ribosomal stalk of the 50S ribosomal subunit. Interacts with L10 and the large rRNA to form the base of the stalk. L10 forms an elongated spine to which L12 dimers bind in a sequential fashion forming a multimeric L10(L12)X complex.</text>
</comment>
<comment type="PTM">
    <text evidence="1">One or more lysine residues are methylated.</text>
</comment>
<comment type="similarity">
    <text evidence="1">Belongs to the universal ribosomal protein uL11 family.</text>
</comment>
<gene>
    <name evidence="1" type="primary">rplK</name>
    <name type="ordered locus">ZMO0725</name>
</gene>
<dbReference type="EMBL" id="AE008692">
    <property type="protein sequence ID" value="AAV89349.1"/>
    <property type="molecule type" value="Genomic_DNA"/>
</dbReference>
<dbReference type="RefSeq" id="WP_011240610.1">
    <property type="nucleotide sequence ID" value="NZ_CP035711.1"/>
</dbReference>
<dbReference type="SMR" id="Q5NPL1"/>
<dbReference type="STRING" id="264203.ZMO0725"/>
<dbReference type="GeneID" id="79904103"/>
<dbReference type="KEGG" id="zmo:ZMO0725"/>
<dbReference type="eggNOG" id="COG0080">
    <property type="taxonomic scope" value="Bacteria"/>
</dbReference>
<dbReference type="HOGENOM" id="CLU_074237_2_0_5"/>
<dbReference type="Proteomes" id="UP000001173">
    <property type="component" value="Chromosome"/>
</dbReference>
<dbReference type="GO" id="GO:0022625">
    <property type="term" value="C:cytosolic large ribosomal subunit"/>
    <property type="evidence" value="ECO:0007669"/>
    <property type="project" value="TreeGrafter"/>
</dbReference>
<dbReference type="GO" id="GO:0070180">
    <property type="term" value="F:large ribosomal subunit rRNA binding"/>
    <property type="evidence" value="ECO:0007669"/>
    <property type="project" value="UniProtKB-UniRule"/>
</dbReference>
<dbReference type="GO" id="GO:0003735">
    <property type="term" value="F:structural constituent of ribosome"/>
    <property type="evidence" value="ECO:0007669"/>
    <property type="project" value="InterPro"/>
</dbReference>
<dbReference type="GO" id="GO:0006412">
    <property type="term" value="P:translation"/>
    <property type="evidence" value="ECO:0007669"/>
    <property type="project" value="UniProtKB-UniRule"/>
</dbReference>
<dbReference type="CDD" id="cd00349">
    <property type="entry name" value="Ribosomal_L11"/>
    <property type="match status" value="1"/>
</dbReference>
<dbReference type="FunFam" id="1.10.10.250:FF:000001">
    <property type="entry name" value="50S ribosomal protein L11"/>
    <property type="match status" value="1"/>
</dbReference>
<dbReference type="FunFam" id="3.30.1550.10:FF:000001">
    <property type="entry name" value="50S ribosomal protein L11"/>
    <property type="match status" value="1"/>
</dbReference>
<dbReference type="Gene3D" id="1.10.10.250">
    <property type="entry name" value="Ribosomal protein L11, C-terminal domain"/>
    <property type="match status" value="1"/>
</dbReference>
<dbReference type="Gene3D" id="3.30.1550.10">
    <property type="entry name" value="Ribosomal protein L11/L12, N-terminal domain"/>
    <property type="match status" value="1"/>
</dbReference>
<dbReference type="HAMAP" id="MF_00736">
    <property type="entry name" value="Ribosomal_uL11"/>
    <property type="match status" value="1"/>
</dbReference>
<dbReference type="InterPro" id="IPR000911">
    <property type="entry name" value="Ribosomal_uL11"/>
</dbReference>
<dbReference type="InterPro" id="IPR006519">
    <property type="entry name" value="Ribosomal_uL11_bac-typ"/>
</dbReference>
<dbReference type="InterPro" id="IPR020783">
    <property type="entry name" value="Ribosomal_uL11_C"/>
</dbReference>
<dbReference type="InterPro" id="IPR036769">
    <property type="entry name" value="Ribosomal_uL11_C_sf"/>
</dbReference>
<dbReference type="InterPro" id="IPR020784">
    <property type="entry name" value="Ribosomal_uL11_N"/>
</dbReference>
<dbReference type="InterPro" id="IPR036796">
    <property type="entry name" value="Ribosomal_uL11_N_sf"/>
</dbReference>
<dbReference type="NCBIfam" id="TIGR01632">
    <property type="entry name" value="L11_bact"/>
    <property type="match status" value="1"/>
</dbReference>
<dbReference type="PANTHER" id="PTHR11661">
    <property type="entry name" value="60S RIBOSOMAL PROTEIN L12"/>
    <property type="match status" value="1"/>
</dbReference>
<dbReference type="PANTHER" id="PTHR11661:SF1">
    <property type="entry name" value="LARGE RIBOSOMAL SUBUNIT PROTEIN UL11M"/>
    <property type="match status" value="1"/>
</dbReference>
<dbReference type="Pfam" id="PF00298">
    <property type="entry name" value="Ribosomal_L11"/>
    <property type="match status" value="1"/>
</dbReference>
<dbReference type="Pfam" id="PF03946">
    <property type="entry name" value="Ribosomal_L11_N"/>
    <property type="match status" value="1"/>
</dbReference>
<dbReference type="SMART" id="SM00649">
    <property type="entry name" value="RL11"/>
    <property type="match status" value="1"/>
</dbReference>
<dbReference type="SUPFAM" id="SSF54747">
    <property type="entry name" value="Ribosomal L11/L12e N-terminal domain"/>
    <property type="match status" value="1"/>
</dbReference>
<dbReference type="SUPFAM" id="SSF46906">
    <property type="entry name" value="Ribosomal protein L11, C-terminal domain"/>
    <property type="match status" value="1"/>
</dbReference>
<feature type="chain" id="PRO_0000104420" description="Large ribosomal subunit protein uL11">
    <location>
        <begin position="1"/>
        <end position="143"/>
    </location>
</feature>
<organism>
    <name type="scientific">Zymomonas mobilis subsp. mobilis (strain ATCC 31821 / ZM4 / CP4)</name>
    <dbReference type="NCBI Taxonomy" id="264203"/>
    <lineage>
        <taxon>Bacteria</taxon>
        <taxon>Pseudomonadati</taxon>
        <taxon>Pseudomonadota</taxon>
        <taxon>Alphaproteobacteria</taxon>
        <taxon>Sphingomonadales</taxon>
        <taxon>Zymomonadaceae</taxon>
        <taxon>Zymomonas</taxon>
    </lineage>
</organism>
<name>RL11_ZYMMO</name>
<reference key="1">
    <citation type="journal article" date="2005" name="Nat. Biotechnol.">
        <title>The genome sequence of the ethanologenic bacterium Zymomonas mobilis ZM4.</title>
        <authorList>
            <person name="Seo J.-S."/>
            <person name="Chong H."/>
            <person name="Park H.S."/>
            <person name="Yoon K.-O."/>
            <person name="Jung C."/>
            <person name="Kim J.J."/>
            <person name="Hong J.H."/>
            <person name="Kim H."/>
            <person name="Kim J.-H."/>
            <person name="Kil J.-I."/>
            <person name="Park C.J."/>
            <person name="Oh H.-M."/>
            <person name="Lee J.-S."/>
            <person name="Jin S.-J."/>
            <person name="Um H.-W."/>
            <person name="Lee H.-J."/>
            <person name="Oh S.-J."/>
            <person name="Kim J.Y."/>
            <person name="Kang H.L."/>
            <person name="Lee S.Y."/>
            <person name="Lee K.J."/>
            <person name="Kang H.S."/>
        </authorList>
    </citation>
    <scope>NUCLEOTIDE SEQUENCE [LARGE SCALE GENOMIC DNA]</scope>
    <source>
        <strain>ATCC 31821 / ZM4 / CP4</strain>
    </source>
</reference>
<evidence type="ECO:0000255" key="1">
    <source>
        <dbReference type="HAMAP-Rule" id="MF_00736"/>
    </source>
</evidence>
<evidence type="ECO:0000305" key="2"/>
<sequence length="143" mass="15186">MAKKITGYIKLQVPAGKANPSPPIGPALGQRGVNIMEFCKAFNAKSQGMEPGTPLPTIITVYADRSFSFESKMPPVSYLLKKAINLKSGSKEPGKAVAGKIKRSQIVEIANTKMPDLNANDVEAATRIIEGSARAMGLEVVEG</sequence>